<sequence length="676" mass="73759">APGARPAASRERGHKSREERCGERGAAAGRRARGAMLEAMEVPSHSRQLLLQLNTQRTKGFLCDVIIVVQNALFRAHKNILAASSAYLKSLVVHDNLLNLDHEMVSPGIFRLILDFIYTGRLGECEPGGEQSLGAVLAAASYLQIPGLVALCKKKLKRSGKYCHLRGGYAPYKLGRGLRATTPVIQACYSGTPRPVDLQPVEPAAPLNTQCGELYASASQGTPLHPHGLCPPERHCSPPCGLDLSKKSPTGPSAQLLPTDRLLPAEPREPSLPPRHDSPPVSGGLLAGHPAAYKDSPPGGEPGGHPHATDPFRSTPPCAEPPLPRGDGRELMYRWMKHEPLGPYLDEGEAEKELEREEKAESPPAAPQPRYPSVESNDLEPDNSTSEETGSSEGPSPGDALDRYCNHLGYEPESLGDNLYVCIPCGKGFPSSEQLNAHVEAHNEEELYHKAAAEQAVPFLDKGGAGLGDILRPYRCSSCDKSYKDPATLRQHEKTHWLTRPYPCTICGKKFTQRGTMTRHMRSHLGLKPFACDACGMRFTRQYRLTEHMRIHSGEKPYECQVCGGKFAQQRNLISHMKMHAAGPDGKAKLDFPDSVYAMARLTADQLGLKQEKAAELLSHTSHFLSDPKAMESLYPLAKFTAEHLGLSQDKAAEVLAQAPHLHADAARTIERYSPP</sequence>
<accession>Q90850</accession>
<accession>Q90851</accession>
<accession>Q90852</accession>
<comment type="function">
    <text>Binds specifically to the gamma F-1-binding motif of the gamma F-crystallin promoter. May have a regulatory role in sclerotome specification and/or differentiation. Isoform 2 functions as a transcriptional repressor in lens cells.</text>
</comment>
<comment type="subunit">
    <text evidence="1">Interacts with CtBP.</text>
</comment>
<comment type="subcellular location">
    <subcellularLocation>
        <location evidence="6">Nucleus</location>
    </subcellularLocation>
</comment>
<comment type="alternative products">
    <event type="alternative splicing"/>
    <isoform>
        <id>Q90850-1</id>
        <name>3</name>
        <name>GammaFBP-C</name>
        <sequence type="displayed"/>
    </isoform>
    <isoform>
        <id>Q90850-2</id>
        <name>1</name>
        <name>GammaFBP-A</name>
        <sequence type="described" ref="VSP_006827"/>
    </isoform>
    <isoform>
        <id>Q90850-3</id>
        <name>2</name>
        <name>GammaFBP-B</name>
        <sequence type="described" ref="VSP_006828"/>
    </isoform>
    <text>Additional isoforms seem to exist.</text>
</comment>
<comment type="tissue specificity">
    <text>Isoform 1 is highly expressed in kidney and lung. Expression of isoform 2 is higher in the lens, retina and stomach, and extremely low in heart, muscle, kidney and lung. Isoform 3 is weakly expressed in heart, kidney and lens.</text>
</comment>
<comment type="developmental stage">
    <text>In the embryo of stage 11, expressed predominantly in the head mesenchyme surrounding the brain and in the paraxial mesoderm. Highly expressed in presomitic mesoderm and then over the entire epithelial somite. During somitic differentiation, expression becomes restricted to the sclerotome. In the developing lens, expression is most active at the beginning of lens fiber cell differentiation.</text>
</comment>
<comment type="similarity">
    <text evidence="6">Belongs to the krueppel C2H2-type zinc-finger protein family. Hic subfamily.</text>
</comment>
<organism>
    <name type="scientific">Gallus gallus</name>
    <name type="common">Chicken</name>
    <dbReference type="NCBI Taxonomy" id="9031"/>
    <lineage>
        <taxon>Eukaryota</taxon>
        <taxon>Metazoa</taxon>
        <taxon>Chordata</taxon>
        <taxon>Craniata</taxon>
        <taxon>Vertebrata</taxon>
        <taxon>Euteleostomi</taxon>
        <taxon>Archelosauria</taxon>
        <taxon>Archosauria</taxon>
        <taxon>Dinosauria</taxon>
        <taxon>Saurischia</taxon>
        <taxon>Theropoda</taxon>
        <taxon>Coelurosauria</taxon>
        <taxon>Aves</taxon>
        <taxon>Neognathae</taxon>
        <taxon>Galloanserae</taxon>
        <taxon>Galliformes</taxon>
        <taxon>Phasianidae</taxon>
        <taxon>Phasianinae</taxon>
        <taxon>Gallus</taxon>
    </lineage>
</organism>
<dbReference type="EMBL" id="X79011">
    <property type="protein sequence ID" value="CAA55644.1"/>
    <property type="molecule type" value="mRNA"/>
</dbReference>
<dbReference type="EMBL" id="X79050">
    <property type="protein sequence ID" value="CAA55652.1"/>
    <property type="molecule type" value="mRNA"/>
</dbReference>
<dbReference type="EMBL" id="X79051">
    <property type="protein sequence ID" value="CAA55653.1"/>
    <property type="molecule type" value="mRNA"/>
</dbReference>
<dbReference type="PIR" id="I50643">
    <property type="entry name" value="I50643"/>
</dbReference>
<dbReference type="RefSeq" id="NP_001384433.1">
    <molecule id="Q90850-2"/>
    <property type="nucleotide sequence ID" value="NM_001397504.1"/>
</dbReference>
<dbReference type="RefSeq" id="NP_001384434.1">
    <molecule id="Q90850-3"/>
    <property type="nucleotide sequence ID" value="NM_001397505.1"/>
</dbReference>
<dbReference type="RefSeq" id="NP_990567.1">
    <molecule id="Q90850-2"/>
    <property type="nucleotide sequence ID" value="NM_205236.2"/>
</dbReference>
<dbReference type="RefSeq" id="XP_046758252.1">
    <molecule id="Q90850-3"/>
    <property type="nucleotide sequence ID" value="XM_046902296.1"/>
</dbReference>
<dbReference type="RefSeq" id="XP_046758253.1">
    <molecule id="Q90850-3"/>
    <property type="nucleotide sequence ID" value="XM_046902297.1"/>
</dbReference>
<dbReference type="RefSeq" id="XP_046785874.1">
    <molecule id="Q90850-3"/>
    <property type="nucleotide sequence ID" value="XM_046929918.1"/>
</dbReference>
<dbReference type="RefSeq" id="XP_046785875.1">
    <molecule id="Q90850-3"/>
    <property type="nucleotide sequence ID" value="XM_046929919.1"/>
</dbReference>
<dbReference type="SMR" id="Q90850"/>
<dbReference type="FunCoup" id="Q90850">
    <property type="interactions" value="181"/>
</dbReference>
<dbReference type="STRING" id="9031.ENSGALP00000053534"/>
<dbReference type="PaxDb" id="9031-ENSGALP00000040837"/>
<dbReference type="Ensembl" id="ENSGALT00010071112.1">
    <molecule id="Q90850-2"/>
    <property type="protein sequence ID" value="ENSGALP00010043803.1"/>
    <property type="gene ID" value="ENSGALG00010029401.1"/>
</dbReference>
<dbReference type="Ensembl" id="ENSGALT00010071113.1">
    <molecule id="Q90850-3"/>
    <property type="protein sequence ID" value="ENSGALP00010043804.1"/>
    <property type="gene ID" value="ENSGALG00010029401.1"/>
</dbReference>
<dbReference type="Ensembl" id="ENSGALT00010071114.1">
    <molecule id="Q90850-3"/>
    <property type="protein sequence ID" value="ENSGALP00010043805.1"/>
    <property type="gene ID" value="ENSGALG00010029401.1"/>
</dbReference>
<dbReference type="Ensembl" id="ENSGALT00010071115.1">
    <molecule id="Q90850-3"/>
    <property type="protein sequence ID" value="ENSGALP00010043806.1"/>
    <property type="gene ID" value="ENSGALG00010029401.1"/>
</dbReference>
<dbReference type="Ensembl" id="ENSGALT00010071116.1">
    <molecule id="Q90850-3"/>
    <property type="protein sequence ID" value="ENSGALP00010043807.1"/>
    <property type="gene ID" value="ENSGALG00010029401.1"/>
</dbReference>
<dbReference type="Ensembl" id="ENSGALT00010071117.1">
    <molecule id="Q90850-3"/>
    <property type="protein sequence ID" value="ENSGALP00010043808.1"/>
    <property type="gene ID" value="ENSGALG00010029401.1"/>
</dbReference>
<dbReference type="GeneID" id="396164"/>
<dbReference type="KEGG" id="gga:396164"/>
<dbReference type="CTD" id="3090"/>
<dbReference type="VEuPathDB" id="HostDB:geneid_396164"/>
<dbReference type="eggNOG" id="KOG1721">
    <property type="taxonomic scope" value="Eukaryota"/>
</dbReference>
<dbReference type="GeneTree" id="ENSGT00940000161725"/>
<dbReference type="HOGENOM" id="CLU_015352_1_0_1"/>
<dbReference type="InParanoid" id="Q90850"/>
<dbReference type="OMA" id="PLNTHCA"/>
<dbReference type="OrthoDB" id="8922241at2759"/>
<dbReference type="PhylomeDB" id="Q90850"/>
<dbReference type="Reactome" id="R-GGA-3232118">
    <property type="pathway name" value="SUMOylation of transcription factors"/>
</dbReference>
<dbReference type="Proteomes" id="UP000000539">
    <property type="component" value="Chromosome 19"/>
</dbReference>
<dbReference type="Bgee" id="ENSGALG00000042077">
    <property type="expression patterns" value="Expressed in heart and 12 other cell types or tissues"/>
</dbReference>
<dbReference type="GO" id="GO:0000785">
    <property type="term" value="C:chromatin"/>
    <property type="evidence" value="ECO:0007669"/>
    <property type="project" value="Ensembl"/>
</dbReference>
<dbReference type="GO" id="GO:0005634">
    <property type="term" value="C:nucleus"/>
    <property type="evidence" value="ECO:0000318"/>
    <property type="project" value="GO_Central"/>
</dbReference>
<dbReference type="GO" id="GO:0000981">
    <property type="term" value="F:DNA-binding transcription factor activity, RNA polymerase II-specific"/>
    <property type="evidence" value="ECO:0000318"/>
    <property type="project" value="GO_Central"/>
</dbReference>
<dbReference type="GO" id="GO:0001227">
    <property type="term" value="F:DNA-binding transcription repressor activity, RNA polymerase II-specific"/>
    <property type="evidence" value="ECO:0007669"/>
    <property type="project" value="Ensembl"/>
</dbReference>
<dbReference type="GO" id="GO:0042826">
    <property type="term" value="F:histone deacetylase binding"/>
    <property type="evidence" value="ECO:0007669"/>
    <property type="project" value="Ensembl"/>
</dbReference>
<dbReference type="GO" id="GO:1990837">
    <property type="term" value="F:sequence-specific double-stranded DNA binding"/>
    <property type="evidence" value="ECO:0007669"/>
    <property type="project" value="Ensembl"/>
</dbReference>
<dbReference type="GO" id="GO:0008270">
    <property type="term" value="F:zinc ion binding"/>
    <property type="evidence" value="ECO:0007669"/>
    <property type="project" value="UniProtKB-KW"/>
</dbReference>
<dbReference type="GO" id="GO:0008630">
    <property type="term" value="P:intrinsic apoptotic signaling pathway in response to DNA damage"/>
    <property type="evidence" value="ECO:0007669"/>
    <property type="project" value="Ensembl"/>
</dbReference>
<dbReference type="GO" id="GO:0030178">
    <property type="term" value="P:negative regulation of Wnt signaling pathway"/>
    <property type="evidence" value="ECO:0007669"/>
    <property type="project" value="Ensembl"/>
</dbReference>
<dbReference type="GO" id="GO:0043517">
    <property type="term" value="P:positive regulation of DNA damage response, signal transduction by p53 class mediator"/>
    <property type="evidence" value="ECO:0007669"/>
    <property type="project" value="Ensembl"/>
</dbReference>
<dbReference type="GO" id="GO:0006357">
    <property type="term" value="P:regulation of transcription by RNA polymerase II"/>
    <property type="evidence" value="ECO:0000318"/>
    <property type="project" value="GO_Central"/>
</dbReference>
<dbReference type="CDD" id="cd18333">
    <property type="entry name" value="BTB_POZ_ZBTB29_HIC1"/>
    <property type="match status" value="1"/>
</dbReference>
<dbReference type="FunFam" id="3.30.160.60:FF:000195">
    <property type="entry name" value="Hypermethylated in cancer 1 protein-like"/>
    <property type="match status" value="2"/>
</dbReference>
<dbReference type="FunFam" id="3.30.160.60:FF:000746">
    <property type="entry name" value="hypermethylated in cancer 2 protein-like"/>
    <property type="match status" value="1"/>
</dbReference>
<dbReference type="FunFam" id="3.30.710.10:FF:000032">
    <property type="entry name" value="hypermethylated in cancer 2 protein-like"/>
    <property type="match status" value="1"/>
</dbReference>
<dbReference type="FunFam" id="3.30.160.60:FF:001289">
    <property type="entry name" value="Zinc finger protein 574"/>
    <property type="match status" value="1"/>
</dbReference>
<dbReference type="Gene3D" id="3.30.160.60">
    <property type="entry name" value="Classic Zinc Finger"/>
    <property type="match status" value="5"/>
</dbReference>
<dbReference type="Gene3D" id="3.30.710.10">
    <property type="entry name" value="Potassium Channel Kv1.1, Chain A"/>
    <property type="match status" value="1"/>
</dbReference>
<dbReference type="InterPro" id="IPR000210">
    <property type="entry name" value="BTB/POZ_dom"/>
</dbReference>
<dbReference type="InterPro" id="IPR011333">
    <property type="entry name" value="SKP1/BTB/POZ_sf"/>
</dbReference>
<dbReference type="InterPro" id="IPR036236">
    <property type="entry name" value="Znf_C2H2_sf"/>
</dbReference>
<dbReference type="InterPro" id="IPR013087">
    <property type="entry name" value="Znf_C2H2_type"/>
</dbReference>
<dbReference type="PANTHER" id="PTHR24394:SF16">
    <property type="entry name" value="HYPERMETHYLATED IN CANCER 1 PROTEIN"/>
    <property type="match status" value="1"/>
</dbReference>
<dbReference type="PANTHER" id="PTHR24394">
    <property type="entry name" value="ZINC FINGER PROTEIN"/>
    <property type="match status" value="1"/>
</dbReference>
<dbReference type="Pfam" id="PF00651">
    <property type="entry name" value="BTB"/>
    <property type="match status" value="1"/>
</dbReference>
<dbReference type="Pfam" id="PF00096">
    <property type="entry name" value="zf-C2H2"/>
    <property type="match status" value="4"/>
</dbReference>
<dbReference type="SMART" id="SM00225">
    <property type="entry name" value="BTB"/>
    <property type="match status" value="1"/>
</dbReference>
<dbReference type="SMART" id="SM00355">
    <property type="entry name" value="ZnF_C2H2"/>
    <property type="match status" value="5"/>
</dbReference>
<dbReference type="SUPFAM" id="SSF57667">
    <property type="entry name" value="beta-beta-alpha zinc fingers"/>
    <property type="match status" value="3"/>
</dbReference>
<dbReference type="SUPFAM" id="SSF54695">
    <property type="entry name" value="POZ domain"/>
    <property type="match status" value="1"/>
</dbReference>
<dbReference type="PROSITE" id="PS50097">
    <property type="entry name" value="BTB"/>
    <property type="match status" value="1"/>
</dbReference>
<dbReference type="PROSITE" id="PS00028">
    <property type="entry name" value="ZINC_FINGER_C2H2_1"/>
    <property type="match status" value="5"/>
</dbReference>
<dbReference type="PROSITE" id="PS50157">
    <property type="entry name" value="ZINC_FINGER_C2H2_2"/>
    <property type="match status" value="5"/>
</dbReference>
<name>HIC1_CHICK</name>
<protein>
    <recommendedName>
        <fullName>Hypermethylated in cancer 1 protein</fullName>
        <shortName>Hic-1</shortName>
    </recommendedName>
    <alternativeName>
        <fullName>GammaFBP</fullName>
    </alternativeName>
</protein>
<feature type="chain" id="PRO_0000046944" description="Hypermethylated in cancer 1 protein">
    <location>
        <begin position="1" status="less than"/>
        <end position="676"/>
    </location>
</feature>
<feature type="domain" description="BTB" evidence="2">
    <location>
        <begin position="63"/>
        <end position="126"/>
    </location>
</feature>
<feature type="zinc finger region" description="C2H2-type 1" evidence="3">
    <location>
        <begin position="420"/>
        <end position="447"/>
    </location>
</feature>
<feature type="zinc finger region" description="C2H2-type 2" evidence="3">
    <location>
        <begin position="474"/>
        <end position="501"/>
    </location>
</feature>
<feature type="zinc finger region" description="C2H2-type 3" evidence="3">
    <location>
        <begin position="502"/>
        <end position="529"/>
    </location>
</feature>
<feature type="zinc finger region" description="C2H2-type 4" evidence="3">
    <location>
        <begin position="530"/>
        <end position="557"/>
    </location>
</feature>
<feature type="zinc finger region" description="C2H2-type 5" evidence="3">
    <location>
        <begin position="558"/>
        <end position="585"/>
    </location>
</feature>
<feature type="region of interest" description="Disordered" evidence="4">
    <location>
        <begin position="1"/>
        <end position="27"/>
    </location>
</feature>
<feature type="region of interest" description="Binding to CtBP">
    <location>
        <begin position="241"/>
        <end position="245"/>
    </location>
</feature>
<feature type="region of interest" description="Disordered" evidence="4">
    <location>
        <begin position="264"/>
        <end position="326"/>
    </location>
</feature>
<feature type="region of interest" description="Disordered" evidence="4">
    <location>
        <begin position="342"/>
        <end position="405"/>
    </location>
</feature>
<feature type="compositionally biased region" description="Basic and acidic residues" evidence="4">
    <location>
        <begin position="8"/>
        <end position="23"/>
    </location>
</feature>
<feature type="compositionally biased region" description="Basic and acidic residues" evidence="4">
    <location>
        <begin position="266"/>
        <end position="278"/>
    </location>
</feature>
<feature type="compositionally biased region" description="Basic and acidic residues" evidence="4">
    <location>
        <begin position="351"/>
        <end position="361"/>
    </location>
</feature>
<feature type="compositionally biased region" description="Low complexity" evidence="4">
    <location>
        <begin position="384"/>
        <end position="398"/>
    </location>
</feature>
<feature type="splice variant" id="VSP_006827" description="In isoform 1." evidence="5">
    <original>APGARPAASRERGHKSREERCGERGAAAGRRARGA</original>
    <variation>MRVHRELGWLAEGSGRAGRRARGA</variation>
    <location>
        <begin position="1"/>
        <end position="35"/>
    </location>
</feature>
<feature type="splice variant" id="VSP_006828" description="In isoform 2." evidence="5">
    <location>
        <begin position="1"/>
        <end position="35"/>
    </location>
</feature>
<feature type="non-terminal residue">
    <location>
        <position position="1"/>
    </location>
</feature>
<keyword id="KW-0025">Alternative splicing</keyword>
<keyword id="KW-0217">Developmental protein</keyword>
<keyword id="KW-0238">DNA-binding</keyword>
<keyword id="KW-0479">Metal-binding</keyword>
<keyword id="KW-0539">Nucleus</keyword>
<keyword id="KW-1185">Reference proteome</keyword>
<keyword id="KW-0677">Repeat</keyword>
<keyword id="KW-0678">Repressor</keyword>
<keyword id="KW-0804">Transcription</keyword>
<keyword id="KW-0805">Transcription regulation</keyword>
<keyword id="KW-0862">Zinc</keyword>
<keyword id="KW-0863">Zinc-finger</keyword>
<proteinExistence type="evidence at transcript level"/>
<gene>
    <name type="primary">HIC1</name>
</gene>
<evidence type="ECO:0000250" key="1"/>
<evidence type="ECO:0000255" key="2">
    <source>
        <dbReference type="PROSITE-ProRule" id="PRU00037"/>
    </source>
</evidence>
<evidence type="ECO:0000255" key="3">
    <source>
        <dbReference type="PROSITE-ProRule" id="PRU00042"/>
    </source>
</evidence>
<evidence type="ECO:0000256" key="4">
    <source>
        <dbReference type="SAM" id="MobiDB-lite"/>
    </source>
</evidence>
<evidence type="ECO:0000303" key="5">
    <source>
    </source>
</evidence>
<evidence type="ECO:0000305" key="6"/>
<reference key="1">
    <citation type="journal article" date="1994" name="Dev. Biol.">
        <title>Novel zinc finger proteins that interact with the mouse gamma F-crystallin promoter and are expressed in the sclerotome during early somitogenesis.</title>
        <authorList>
            <person name="Liu Q."/>
            <person name="Shalaby F."/>
            <person name="Puri M.C."/>
            <person name="Tang S."/>
            <person name="Breitman M.L."/>
        </authorList>
    </citation>
    <scope>NUCLEOTIDE SEQUENCE [MRNA] (ISOFORMS 1; 2 AND 3)</scope>
    <source>
        <tissue>Embryonic lens</tissue>
    </source>
</reference>